<name>SKP1_ARTOT</name>
<accession>Q8TGW7</accession>
<reference key="1">
    <citation type="journal article" date="2005" name="Fungal Genet. Biol.">
        <title>Fluconazole upregulates sconC expression and inhibits sulphur metabolism in Microsporum canis.</title>
        <authorList>
            <person name="Uthman A."/>
            <person name="Dockal M."/>
            <person name="Soltz-Szots J."/>
            <person name="Tschachler E."/>
        </authorList>
    </citation>
    <scope>NUCLEOTIDE SEQUENCE [GENOMIC DNA]</scope>
    <scope>INDUCTION</scope>
    <scope>FUNCTION</scope>
</reference>
<keyword id="KW-0833">Ubl conjugation pathway</keyword>
<proteinExistence type="evidence at transcript level"/>
<sequence length="165" mass="18707">MAAAATSKITLTSSDGVDITIDRQVAERSILIKNMLKDLGDSGEAIPIPNVNESVLKKVIEWCKHHKGDPPSTGDDDVDSRRKTTDIDEWDQKFMQVDQEMLFEIILAANYLDIKALLDVGCKTVANMIKGKSPEEIRKTFNIQNDFTPEEEDQIRRENEWAEDR</sequence>
<organism>
    <name type="scientific">Arthroderma otae</name>
    <name type="common">Microsporum canis</name>
    <dbReference type="NCBI Taxonomy" id="63405"/>
    <lineage>
        <taxon>Eukaryota</taxon>
        <taxon>Fungi</taxon>
        <taxon>Dikarya</taxon>
        <taxon>Ascomycota</taxon>
        <taxon>Pezizomycotina</taxon>
        <taxon>Eurotiomycetes</taxon>
        <taxon>Eurotiomycetidae</taxon>
        <taxon>Onygenales</taxon>
        <taxon>Arthrodermataceae</taxon>
        <taxon>Microsporum</taxon>
    </lineage>
</organism>
<protein>
    <recommendedName>
        <fullName>E3 ubiquitin ligase complex SCF subunit sconC</fullName>
    </recommendedName>
    <alternativeName>
        <fullName>Sulfur controller C</fullName>
    </alternativeName>
    <alternativeName>
        <fullName>Sulfur metabolite repression control protein C</fullName>
    </alternativeName>
</protein>
<gene>
    <name type="primary">sconC</name>
    <name type="synonym">skpA</name>
</gene>
<comment type="function">
    <text evidence="1 2">Essential component of the SCF (SKP1-CUL1-F-box protein) E3 ubiquitin ligase complexes, which mediate the ubiquitination and subsequent proteasomal degradation of target proteins (By similarity). Controls sulfur metabolite repression, probably by mediating the inactivation or degradation of the metR transcription factor.</text>
</comment>
<comment type="pathway">
    <text>Protein modification; protein ubiquitination.</text>
</comment>
<comment type="subunit">
    <text evidence="1">Component of the SCF (SKP1-CUL1-F-box protein) E3 ubiquitin ligase complexes.</text>
</comment>
<comment type="induction">
    <text evidence="2">By fluconazole, an azole-derivative widely used for the treatment of fungal infections of the skin and its appendages.</text>
</comment>
<comment type="similarity">
    <text evidence="3">Belongs to the SKP1 family.</text>
</comment>
<dbReference type="EMBL" id="AF408428">
    <property type="protein sequence ID" value="AAL76231.1"/>
    <property type="molecule type" value="Genomic_DNA"/>
</dbReference>
<dbReference type="SMR" id="Q8TGW7"/>
<dbReference type="UniPathway" id="UPA00143"/>
<dbReference type="GO" id="GO:0016567">
    <property type="term" value="P:protein ubiquitination"/>
    <property type="evidence" value="ECO:0007669"/>
    <property type="project" value="UniProtKB-UniPathway"/>
</dbReference>
<dbReference type="GO" id="GO:0006511">
    <property type="term" value="P:ubiquitin-dependent protein catabolic process"/>
    <property type="evidence" value="ECO:0007669"/>
    <property type="project" value="InterPro"/>
</dbReference>
<dbReference type="CDD" id="cd18322">
    <property type="entry name" value="BTB_POZ_SKP1"/>
    <property type="match status" value="1"/>
</dbReference>
<dbReference type="FunFam" id="3.30.710.10:FF:000026">
    <property type="entry name" value="E3 ubiquitin ligase complex SCF subunit"/>
    <property type="match status" value="1"/>
</dbReference>
<dbReference type="Gene3D" id="3.30.710.10">
    <property type="entry name" value="Potassium Channel Kv1.1, Chain A"/>
    <property type="match status" value="1"/>
</dbReference>
<dbReference type="InterPro" id="IPR016897">
    <property type="entry name" value="SKP1"/>
</dbReference>
<dbReference type="InterPro" id="IPR001232">
    <property type="entry name" value="SKP1-like"/>
</dbReference>
<dbReference type="InterPro" id="IPR036296">
    <property type="entry name" value="SKP1-like_dim_sf"/>
</dbReference>
<dbReference type="InterPro" id="IPR011333">
    <property type="entry name" value="SKP1/BTB/POZ_sf"/>
</dbReference>
<dbReference type="InterPro" id="IPR016072">
    <property type="entry name" value="Skp1_comp_dimer"/>
</dbReference>
<dbReference type="InterPro" id="IPR016073">
    <property type="entry name" value="Skp1_comp_POZ"/>
</dbReference>
<dbReference type="PANTHER" id="PTHR11165">
    <property type="entry name" value="SKP1"/>
    <property type="match status" value="1"/>
</dbReference>
<dbReference type="Pfam" id="PF01466">
    <property type="entry name" value="Skp1"/>
    <property type="match status" value="1"/>
</dbReference>
<dbReference type="Pfam" id="PF03931">
    <property type="entry name" value="Skp1_POZ"/>
    <property type="match status" value="1"/>
</dbReference>
<dbReference type="PIRSF" id="PIRSF028729">
    <property type="entry name" value="E3_ubiquit_lig_SCF_Skp"/>
    <property type="match status" value="1"/>
</dbReference>
<dbReference type="SMART" id="SM00512">
    <property type="entry name" value="Skp1"/>
    <property type="match status" value="1"/>
</dbReference>
<dbReference type="SUPFAM" id="SSF54695">
    <property type="entry name" value="POZ domain"/>
    <property type="match status" value="1"/>
</dbReference>
<dbReference type="SUPFAM" id="SSF81382">
    <property type="entry name" value="Skp1 dimerisation domain-like"/>
    <property type="match status" value="1"/>
</dbReference>
<feature type="chain" id="PRO_0000397259" description="E3 ubiquitin ligase complex SCF subunit sconC">
    <location>
        <begin position="1"/>
        <end position="165"/>
    </location>
</feature>
<feature type="region of interest" description="Interaction with the F-box domain of F-box proteins" evidence="1">
    <location>
        <begin position="106"/>
        <end position="165"/>
    </location>
</feature>
<evidence type="ECO:0000250" key="1"/>
<evidence type="ECO:0000269" key="2">
    <source>
    </source>
</evidence>
<evidence type="ECO:0000305" key="3"/>